<accession>Q8BQX5</accession>
<accession>Q99JV8</accession>
<accession>Q9CWP3</accession>
<keyword id="KW-0025">Alternative splicing</keyword>
<keyword id="KW-0175">Coiled coil</keyword>
<keyword id="KW-0472">Membrane</keyword>
<keyword id="KW-1185">Reference proteome</keyword>
<keyword id="KW-0812">Transmembrane</keyword>
<keyword id="KW-1133">Transmembrane helix</keyword>
<evidence type="ECO:0000255" key="1"/>
<evidence type="ECO:0000303" key="2">
    <source>
    </source>
</evidence>
<evidence type="ECO:0000305" key="3"/>
<feature type="chain" id="PRO_0000305158" description="Transmembrane and coiled-coil domain-containing protein 6">
    <location>
        <begin position="1"/>
        <end position="494"/>
    </location>
</feature>
<feature type="transmembrane region" description="Helical" evidence="1">
    <location>
        <begin position="338"/>
        <end position="358"/>
    </location>
</feature>
<feature type="transmembrane region" description="Helical" evidence="1">
    <location>
        <begin position="386"/>
        <end position="406"/>
    </location>
</feature>
<feature type="coiled-coil region" evidence="1">
    <location>
        <begin position="15"/>
        <end position="39"/>
    </location>
</feature>
<feature type="splice variant" id="VSP_059937" description="In isoform 2." evidence="2">
    <original>LEGSMRTLVGILTSNRALLQLEA</original>
    <variation>SEAGGQHADPCWDFDQQPGLVAA</variation>
    <location>
        <begin position="106"/>
        <end position="128"/>
    </location>
</feature>
<feature type="splice variant" id="VSP_059938" description="In isoform 2." evidence="2">
    <location>
        <begin position="129"/>
        <end position="494"/>
    </location>
</feature>
<feature type="sequence conflict" description="In Ref. 1; BAB26978." evidence="3" ref="1">
    <original>Q</original>
    <variation>R</variation>
    <location>
        <position position="190"/>
    </location>
</feature>
<feature type="sequence conflict" description="In Ref. 2; AAH05637." evidence="3" ref="2">
    <original>W</original>
    <variation>R</variation>
    <location>
        <position position="243"/>
    </location>
</feature>
<organism>
    <name type="scientific">Mus musculus</name>
    <name type="common">Mouse</name>
    <dbReference type="NCBI Taxonomy" id="10090"/>
    <lineage>
        <taxon>Eukaryota</taxon>
        <taxon>Metazoa</taxon>
        <taxon>Chordata</taxon>
        <taxon>Craniata</taxon>
        <taxon>Vertebrata</taxon>
        <taxon>Euteleostomi</taxon>
        <taxon>Mammalia</taxon>
        <taxon>Eutheria</taxon>
        <taxon>Euarchontoglires</taxon>
        <taxon>Glires</taxon>
        <taxon>Rodentia</taxon>
        <taxon>Myomorpha</taxon>
        <taxon>Muroidea</taxon>
        <taxon>Muridae</taxon>
        <taxon>Murinae</taxon>
        <taxon>Mus</taxon>
        <taxon>Mus</taxon>
    </lineage>
</organism>
<proteinExistence type="evidence at protein level"/>
<dbReference type="EMBL" id="AK010487">
    <property type="protein sequence ID" value="BAB26978.1"/>
    <property type="status" value="ALT_FRAME"/>
    <property type="molecule type" value="mRNA"/>
</dbReference>
<dbReference type="EMBL" id="AK046207">
    <property type="protein sequence ID" value="BAC32636.1"/>
    <property type="status" value="ALT_SEQ"/>
    <property type="molecule type" value="mRNA"/>
</dbReference>
<dbReference type="EMBL" id="BC005637">
    <property type="protein sequence ID" value="AAH05637.2"/>
    <property type="molecule type" value="mRNA"/>
</dbReference>
<dbReference type="CCDS" id="CCDS37772.1">
    <molecule id="Q8BQX5-1"/>
</dbReference>
<dbReference type="RefSeq" id="NP_082312.3">
    <molecule id="Q8BQX5-1"/>
    <property type="nucleotide sequence ID" value="NM_028036.3"/>
</dbReference>
<dbReference type="SMR" id="Q8BQX5"/>
<dbReference type="FunCoup" id="Q8BQX5">
    <property type="interactions" value="94"/>
</dbReference>
<dbReference type="STRING" id="10090.ENSMUSP00000007046"/>
<dbReference type="PhosphoSitePlus" id="Q8BQX5"/>
<dbReference type="PaxDb" id="10090-ENSMUSP00000007046"/>
<dbReference type="ProteomicsDB" id="259250">
    <molecule id="Q8BQX5-1"/>
</dbReference>
<dbReference type="ProteomicsDB" id="259251">
    <molecule id="Q8BQX5-2"/>
</dbReference>
<dbReference type="Pumba" id="Q8BQX5"/>
<dbReference type="Antibodypedia" id="45459">
    <property type="antibodies" value="61 antibodies from 18 providers"/>
</dbReference>
<dbReference type="Ensembl" id="ENSMUST00000007046.9">
    <molecule id="Q8BQX5-1"/>
    <property type="protein sequence ID" value="ENSMUSP00000007046.8"/>
    <property type="gene ID" value="ENSMUSG00000006850.9"/>
</dbReference>
<dbReference type="Ensembl" id="ENSMUST00000237727.2">
    <molecule id="Q8BQX5-2"/>
    <property type="protein sequence ID" value="ENSMUSP00000157431.2"/>
    <property type="gene ID" value="ENSMUSG00000006850.9"/>
</dbReference>
<dbReference type="GeneID" id="71983"/>
<dbReference type="KEGG" id="mmu:71983"/>
<dbReference type="UCSC" id="uc008eoh.1">
    <molecule id="Q8BQX5-2"/>
    <property type="organism name" value="mouse"/>
</dbReference>
<dbReference type="UCSC" id="uc008eoi.1">
    <molecule id="Q8BQX5-1"/>
    <property type="organism name" value="mouse"/>
</dbReference>
<dbReference type="AGR" id="MGI:1919233"/>
<dbReference type="CTD" id="55374"/>
<dbReference type="MGI" id="MGI:1919233">
    <property type="gene designation" value="Tmco6"/>
</dbReference>
<dbReference type="VEuPathDB" id="HostDB:ENSMUSG00000006850"/>
<dbReference type="eggNOG" id="ENOG502QPMC">
    <property type="taxonomic scope" value="Eukaryota"/>
</dbReference>
<dbReference type="GeneTree" id="ENSGT00390000008104"/>
<dbReference type="HOGENOM" id="CLU_043630_0_0_1"/>
<dbReference type="InParanoid" id="Q8BQX5"/>
<dbReference type="OMA" id="TLGNICP"/>
<dbReference type="OrthoDB" id="21522at2759"/>
<dbReference type="PhylomeDB" id="Q8BQX5"/>
<dbReference type="TreeFam" id="TF331378"/>
<dbReference type="BioGRID-ORCS" id="71983">
    <property type="hits" value="0 hits in 76 CRISPR screens"/>
</dbReference>
<dbReference type="ChiTaRS" id="Tmco6">
    <property type="organism name" value="mouse"/>
</dbReference>
<dbReference type="PRO" id="PR:Q8BQX5"/>
<dbReference type="Proteomes" id="UP000000589">
    <property type="component" value="Chromosome 18"/>
</dbReference>
<dbReference type="RNAct" id="Q8BQX5">
    <property type="molecule type" value="protein"/>
</dbReference>
<dbReference type="Bgee" id="ENSMUSG00000006850">
    <property type="expression patterns" value="Expressed in granulocyte and 151 other cell types or tissues"/>
</dbReference>
<dbReference type="ExpressionAtlas" id="Q8BQX5">
    <property type="expression patterns" value="baseline and differential"/>
</dbReference>
<dbReference type="GO" id="GO:0016020">
    <property type="term" value="C:membrane"/>
    <property type="evidence" value="ECO:0007669"/>
    <property type="project" value="UniProtKB-SubCell"/>
</dbReference>
<dbReference type="GO" id="GO:0061608">
    <property type="term" value="F:nuclear import signal receptor activity"/>
    <property type="evidence" value="ECO:0007669"/>
    <property type="project" value="InterPro"/>
</dbReference>
<dbReference type="GO" id="GO:0006606">
    <property type="term" value="P:protein import into nucleus"/>
    <property type="evidence" value="ECO:0007669"/>
    <property type="project" value="InterPro"/>
</dbReference>
<dbReference type="Gene3D" id="1.25.10.10">
    <property type="entry name" value="Leucine-rich Repeat Variant"/>
    <property type="match status" value="1"/>
</dbReference>
<dbReference type="InterPro" id="IPR011989">
    <property type="entry name" value="ARM-like"/>
</dbReference>
<dbReference type="InterPro" id="IPR016024">
    <property type="entry name" value="ARM-type_fold"/>
</dbReference>
<dbReference type="InterPro" id="IPR000225">
    <property type="entry name" value="Armadillo"/>
</dbReference>
<dbReference type="InterPro" id="IPR002652">
    <property type="entry name" value="Importin-a_IBB"/>
</dbReference>
<dbReference type="PANTHER" id="PTHR16356:SF1">
    <property type="entry name" value="TRANSMEMBRANE AND COILED-COIL DOMAIN-CONTAINING PROTEIN 6"/>
    <property type="match status" value="1"/>
</dbReference>
<dbReference type="PANTHER" id="PTHR16356">
    <property type="entry name" value="TRANSMEMBRANE AND COILED-COIL DOMAIN-CONTAINING PROTEIN 6 TMCO6"/>
    <property type="match status" value="1"/>
</dbReference>
<dbReference type="SMART" id="SM00185">
    <property type="entry name" value="ARM"/>
    <property type="match status" value="4"/>
</dbReference>
<dbReference type="SUPFAM" id="SSF48371">
    <property type="entry name" value="ARM repeat"/>
    <property type="match status" value="1"/>
</dbReference>
<protein>
    <recommendedName>
        <fullName>Transmembrane and coiled-coil domain-containing protein 6</fullName>
    </recommendedName>
</protein>
<sequence>MWNRRQGRLRTLAFGVEELRRRRREREAALRKARREQQLVSKRLLREDAPEEVGGQSAAVLLGEAEVQQFLRLAQRGTDEKEREKALVSLRRGLQHPDTQQTFIRLEGSMRTLVGILTSNRALLQLEAARCLHELSHSEQSAVAEACLPATSYLLTYLSGHSSDFIELCLYTLGNLIVESEAVRKQLLPQGIVPAFAACIQSPHVAVLEALGYALSQLLQAKEAPEKIIPSILDSSLPQQMLWLMQPGPKLNLGVAMEFAWCLHYIICSQVNNAVLLTHGALPTLALLLLDLAGTVQRMDDVGLELLACPVLRCLSNLLTEVPAEVMGQQMELRDERLVAALFIFLQFFLQKQPALLPEGLWLLNNLTANSPTFCTSLLSLDLIEPLLQLLPLSNAVCMLVLTVLCNVVEKGPAYCQRLWPGPLLSCVLNTLALSDTEVVGQSLELLQLLFLHQPEAARAFLQQSGLQALEKLQEETQLQERIHALQQIAATHG</sequence>
<name>TMCO6_MOUSE</name>
<comment type="subcellular location">
    <subcellularLocation>
        <location evidence="3">Membrane</location>
        <topology evidence="3">Multi-pass membrane protein</topology>
    </subcellularLocation>
</comment>
<comment type="alternative products">
    <event type="alternative splicing"/>
    <isoform>
        <id>Q8BQX5-1</id>
        <name>1</name>
        <sequence type="displayed"/>
    </isoform>
    <isoform>
        <id>Q8BQX5-2</id>
        <name>2</name>
        <sequence type="described" ref="VSP_059937 VSP_059938"/>
    </isoform>
</comment>
<comment type="miscellaneous">
    <molecule>Isoform 2</molecule>
    <text evidence="3">May be produced at very low levels due to a premature stop codon in the mRNA, leading to nonsense-mediated mRNA decay.</text>
</comment>
<comment type="sequence caution" evidence="3">
    <conflict type="frameshift">
        <sequence resource="EMBL-CDS" id="BAB26978"/>
    </conflict>
</comment>
<comment type="sequence caution" evidence="3">
    <conflict type="erroneous translation">
        <sequence resource="EMBL-CDS" id="BAC32636"/>
    </conflict>
    <text>Wrong choice of frame.</text>
</comment>
<gene>
    <name type="primary">Tmco6</name>
</gene>
<reference key="1">
    <citation type="journal article" date="2005" name="Science">
        <title>The transcriptional landscape of the mammalian genome.</title>
        <authorList>
            <person name="Carninci P."/>
            <person name="Kasukawa T."/>
            <person name="Katayama S."/>
            <person name="Gough J."/>
            <person name="Frith M.C."/>
            <person name="Maeda N."/>
            <person name="Oyama R."/>
            <person name="Ravasi T."/>
            <person name="Lenhard B."/>
            <person name="Wells C."/>
            <person name="Kodzius R."/>
            <person name="Shimokawa K."/>
            <person name="Bajic V.B."/>
            <person name="Brenner S.E."/>
            <person name="Batalov S."/>
            <person name="Forrest A.R."/>
            <person name="Zavolan M."/>
            <person name="Davis M.J."/>
            <person name="Wilming L.G."/>
            <person name="Aidinis V."/>
            <person name="Allen J.E."/>
            <person name="Ambesi-Impiombato A."/>
            <person name="Apweiler R."/>
            <person name="Aturaliya R.N."/>
            <person name="Bailey T.L."/>
            <person name="Bansal M."/>
            <person name="Baxter L."/>
            <person name="Beisel K.W."/>
            <person name="Bersano T."/>
            <person name="Bono H."/>
            <person name="Chalk A.M."/>
            <person name="Chiu K.P."/>
            <person name="Choudhary V."/>
            <person name="Christoffels A."/>
            <person name="Clutterbuck D.R."/>
            <person name="Crowe M.L."/>
            <person name="Dalla E."/>
            <person name="Dalrymple B.P."/>
            <person name="de Bono B."/>
            <person name="Della Gatta G."/>
            <person name="di Bernardo D."/>
            <person name="Down T."/>
            <person name="Engstrom P."/>
            <person name="Fagiolini M."/>
            <person name="Faulkner G."/>
            <person name="Fletcher C.F."/>
            <person name="Fukushima T."/>
            <person name="Furuno M."/>
            <person name="Futaki S."/>
            <person name="Gariboldi M."/>
            <person name="Georgii-Hemming P."/>
            <person name="Gingeras T.R."/>
            <person name="Gojobori T."/>
            <person name="Green R.E."/>
            <person name="Gustincich S."/>
            <person name="Harbers M."/>
            <person name="Hayashi Y."/>
            <person name="Hensch T.K."/>
            <person name="Hirokawa N."/>
            <person name="Hill D."/>
            <person name="Huminiecki L."/>
            <person name="Iacono M."/>
            <person name="Ikeo K."/>
            <person name="Iwama A."/>
            <person name="Ishikawa T."/>
            <person name="Jakt M."/>
            <person name="Kanapin A."/>
            <person name="Katoh M."/>
            <person name="Kawasawa Y."/>
            <person name="Kelso J."/>
            <person name="Kitamura H."/>
            <person name="Kitano H."/>
            <person name="Kollias G."/>
            <person name="Krishnan S.P."/>
            <person name="Kruger A."/>
            <person name="Kummerfeld S.K."/>
            <person name="Kurochkin I.V."/>
            <person name="Lareau L.F."/>
            <person name="Lazarevic D."/>
            <person name="Lipovich L."/>
            <person name="Liu J."/>
            <person name="Liuni S."/>
            <person name="McWilliam S."/>
            <person name="Madan Babu M."/>
            <person name="Madera M."/>
            <person name="Marchionni L."/>
            <person name="Matsuda H."/>
            <person name="Matsuzawa S."/>
            <person name="Miki H."/>
            <person name="Mignone F."/>
            <person name="Miyake S."/>
            <person name="Morris K."/>
            <person name="Mottagui-Tabar S."/>
            <person name="Mulder N."/>
            <person name="Nakano N."/>
            <person name="Nakauchi H."/>
            <person name="Ng P."/>
            <person name="Nilsson R."/>
            <person name="Nishiguchi S."/>
            <person name="Nishikawa S."/>
            <person name="Nori F."/>
            <person name="Ohara O."/>
            <person name="Okazaki Y."/>
            <person name="Orlando V."/>
            <person name="Pang K.C."/>
            <person name="Pavan W.J."/>
            <person name="Pavesi G."/>
            <person name="Pesole G."/>
            <person name="Petrovsky N."/>
            <person name="Piazza S."/>
            <person name="Reed J."/>
            <person name="Reid J.F."/>
            <person name="Ring B.Z."/>
            <person name="Ringwald M."/>
            <person name="Rost B."/>
            <person name="Ruan Y."/>
            <person name="Salzberg S.L."/>
            <person name="Sandelin A."/>
            <person name="Schneider C."/>
            <person name="Schoenbach C."/>
            <person name="Sekiguchi K."/>
            <person name="Semple C.A."/>
            <person name="Seno S."/>
            <person name="Sessa L."/>
            <person name="Sheng Y."/>
            <person name="Shibata Y."/>
            <person name="Shimada H."/>
            <person name="Shimada K."/>
            <person name="Silva D."/>
            <person name="Sinclair B."/>
            <person name="Sperling S."/>
            <person name="Stupka E."/>
            <person name="Sugiura K."/>
            <person name="Sultana R."/>
            <person name="Takenaka Y."/>
            <person name="Taki K."/>
            <person name="Tammoja K."/>
            <person name="Tan S.L."/>
            <person name="Tang S."/>
            <person name="Taylor M.S."/>
            <person name="Tegner J."/>
            <person name="Teichmann S.A."/>
            <person name="Ueda H.R."/>
            <person name="van Nimwegen E."/>
            <person name="Verardo R."/>
            <person name="Wei C.L."/>
            <person name="Yagi K."/>
            <person name="Yamanishi H."/>
            <person name="Zabarovsky E."/>
            <person name="Zhu S."/>
            <person name="Zimmer A."/>
            <person name="Hide W."/>
            <person name="Bult C."/>
            <person name="Grimmond S.M."/>
            <person name="Teasdale R.D."/>
            <person name="Liu E.T."/>
            <person name="Brusic V."/>
            <person name="Quackenbush J."/>
            <person name="Wahlestedt C."/>
            <person name="Mattick J.S."/>
            <person name="Hume D.A."/>
            <person name="Kai C."/>
            <person name="Sasaki D."/>
            <person name="Tomaru Y."/>
            <person name="Fukuda S."/>
            <person name="Kanamori-Katayama M."/>
            <person name="Suzuki M."/>
            <person name="Aoki J."/>
            <person name="Arakawa T."/>
            <person name="Iida J."/>
            <person name="Imamura K."/>
            <person name="Itoh M."/>
            <person name="Kato T."/>
            <person name="Kawaji H."/>
            <person name="Kawagashira N."/>
            <person name="Kawashima T."/>
            <person name="Kojima M."/>
            <person name="Kondo S."/>
            <person name="Konno H."/>
            <person name="Nakano K."/>
            <person name="Ninomiya N."/>
            <person name="Nishio T."/>
            <person name="Okada M."/>
            <person name="Plessy C."/>
            <person name="Shibata K."/>
            <person name="Shiraki T."/>
            <person name="Suzuki S."/>
            <person name="Tagami M."/>
            <person name="Waki K."/>
            <person name="Watahiki A."/>
            <person name="Okamura-Oho Y."/>
            <person name="Suzuki H."/>
            <person name="Kawai J."/>
            <person name="Hayashizaki Y."/>
        </authorList>
    </citation>
    <scope>NUCLEOTIDE SEQUENCE [LARGE SCALE MRNA] (ISOFORMS 1 AND 2)</scope>
    <source>
        <strain>C57BL/6J</strain>
        <tissue>Corpora quadrigemina</tissue>
        <tissue>Embryonic stem cell</tissue>
    </source>
</reference>
<reference key="2">
    <citation type="journal article" date="2004" name="Genome Res.">
        <title>The status, quality, and expansion of the NIH full-length cDNA project: the Mammalian Gene Collection (MGC).</title>
        <authorList>
            <consortium name="The MGC Project Team"/>
        </authorList>
    </citation>
    <scope>NUCLEOTIDE SEQUENCE [LARGE SCALE MRNA] (ISOFORM 1)</scope>
    <source>
        <strain>FVB/N</strain>
        <tissue>Mammary tumor</tissue>
    </source>
</reference>
<reference key="3">
    <citation type="journal article" date="2010" name="Cell">
        <title>A tissue-specific atlas of mouse protein phosphorylation and expression.</title>
        <authorList>
            <person name="Huttlin E.L."/>
            <person name="Jedrychowski M.P."/>
            <person name="Elias J.E."/>
            <person name="Goswami T."/>
            <person name="Rad R."/>
            <person name="Beausoleil S.A."/>
            <person name="Villen J."/>
            <person name="Haas W."/>
            <person name="Sowa M.E."/>
            <person name="Gygi S.P."/>
        </authorList>
    </citation>
    <scope>IDENTIFICATION BY MASS SPECTROMETRY [LARGE SCALE ANALYSIS]</scope>
    <source>
        <tissue>Spleen</tissue>
        <tissue>Testis</tissue>
    </source>
</reference>